<accession>Q0T7B0</accession>
<evidence type="ECO:0000255" key="1">
    <source>
        <dbReference type="HAMAP-Rule" id="MF_00323"/>
    </source>
</evidence>
<gene>
    <name evidence="1" type="primary">hemH</name>
    <name type="ordered locus">SFV_0448</name>
</gene>
<name>HEMH_SHIF8</name>
<keyword id="KW-0963">Cytoplasm</keyword>
<keyword id="KW-0350">Heme biosynthesis</keyword>
<keyword id="KW-0408">Iron</keyword>
<keyword id="KW-0456">Lyase</keyword>
<keyword id="KW-0479">Metal-binding</keyword>
<keyword id="KW-0627">Porphyrin biosynthesis</keyword>
<protein>
    <recommendedName>
        <fullName evidence="1">Ferrochelatase</fullName>
        <ecNumber evidence="1">4.98.1.1</ecNumber>
    </recommendedName>
    <alternativeName>
        <fullName evidence="1">Heme synthase</fullName>
    </alternativeName>
    <alternativeName>
        <fullName evidence="1">Protoheme ferro-lyase</fullName>
    </alternativeName>
</protein>
<dbReference type="EC" id="4.98.1.1" evidence="1"/>
<dbReference type="EMBL" id="CP000266">
    <property type="protein sequence ID" value="ABF02716.1"/>
    <property type="molecule type" value="Genomic_DNA"/>
</dbReference>
<dbReference type="RefSeq" id="WP_001250094.1">
    <property type="nucleotide sequence ID" value="NC_008258.1"/>
</dbReference>
<dbReference type="SMR" id="Q0T7B0"/>
<dbReference type="KEGG" id="sfv:SFV_0448"/>
<dbReference type="HOGENOM" id="CLU_018884_0_0_6"/>
<dbReference type="UniPathway" id="UPA00252">
    <property type="reaction ID" value="UER00325"/>
</dbReference>
<dbReference type="Proteomes" id="UP000000659">
    <property type="component" value="Chromosome"/>
</dbReference>
<dbReference type="GO" id="GO:0005737">
    <property type="term" value="C:cytoplasm"/>
    <property type="evidence" value="ECO:0007669"/>
    <property type="project" value="UniProtKB-SubCell"/>
</dbReference>
<dbReference type="GO" id="GO:0004325">
    <property type="term" value="F:ferrochelatase activity"/>
    <property type="evidence" value="ECO:0007669"/>
    <property type="project" value="UniProtKB-UniRule"/>
</dbReference>
<dbReference type="GO" id="GO:0046872">
    <property type="term" value="F:metal ion binding"/>
    <property type="evidence" value="ECO:0007669"/>
    <property type="project" value="UniProtKB-KW"/>
</dbReference>
<dbReference type="GO" id="GO:0006783">
    <property type="term" value="P:heme biosynthetic process"/>
    <property type="evidence" value="ECO:0007669"/>
    <property type="project" value="UniProtKB-UniRule"/>
</dbReference>
<dbReference type="CDD" id="cd00419">
    <property type="entry name" value="Ferrochelatase_C"/>
    <property type="match status" value="1"/>
</dbReference>
<dbReference type="CDD" id="cd03411">
    <property type="entry name" value="Ferrochelatase_N"/>
    <property type="match status" value="1"/>
</dbReference>
<dbReference type="FunFam" id="3.40.50.1400:FF:000004">
    <property type="entry name" value="Ferrochelatase"/>
    <property type="match status" value="1"/>
</dbReference>
<dbReference type="Gene3D" id="3.40.50.1400">
    <property type="match status" value="2"/>
</dbReference>
<dbReference type="HAMAP" id="MF_00323">
    <property type="entry name" value="Ferrochelatase"/>
    <property type="match status" value="1"/>
</dbReference>
<dbReference type="InterPro" id="IPR001015">
    <property type="entry name" value="Ferrochelatase"/>
</dbReference>
<dbReference type="InterPro" id="IPR019772">
    <property type="entry name" value="Ferrochelatase_AS"/>
</dbReference>
<dbReference type="InterPro" id="IPR033644">
    <property type="entry name" value="Ferrochelatase_C"/>
</dbReference>
<dbReference type="InterPro" id="IPR033659">
    <property type="entry name" value="Ferrochelatase_N"/>
</dbReference>
<dbReference type="NCBIfam" id="TIGR00109">
    <property type="entry name" value="hemH"/>
    <property type="match status" value="1"/>
</dbReference>
<dbReference type="PANTHER" id="PTHR11108">
    <property type="entry name" value="FERROCHELATASE"/>
    <property type="match status" value="1"/>
</dbReference>
<dbReference type="PANTHER" id="PTHR11108:SF1">
    <property type="entry name" value="FERROCHELATASE, MITOCHONDRIAL"/>
    <property type="match status" value="1"/>
</dbReference>
<dbReference type="Pfam" id="PF00762">
    <property type="entry name" value="Ferrochelatase"/>
    <property type="match status" value="1"/>
</dbReference>
<dbReference type="SUPFAM" id="SSF53800">
    <property type="entry name" value="Chelatase"/>
    <property type="match status" value="1"/>
</dbReference>
<dbReference type="PROSITE" id="PS00534">
    <property type="entry name" value="FERROCHELATASE"/>
    <property type="match status" value="1"/>
</dbReference>
<proteinExistence type="inferred from homology"/>
<organism>
    <name type="scientific">Shigella flexneri serotype 5b (strain 8401)</name>
    <dbReference type="NCBI Taxonomy" id="373384"/>
    <lineage>
        <taxon>Bacteria</taxon>
        <taxon>Pseudomonadati</taxon>
        <taxon>Pseudomonadota</taxon>
        <taxon>Gammaproteobacteria</taxon>
        <taxon>Enterobacterales</taxon>
        <taxon>Enterobacteriaceae</taxon>
        <taxon>Shigella</taxon>
    </lineage>
</organism>
<sequence>MRQTKTGILLANLGTPDAPTPEAVKRYLKQFLSDRRVVDTSRLLWWPLLRGVILPLRSPRVAKLYASVWMEDGSPLMVYSRQQQQALAQRLPDTPVALGMSYGSPSLESSVDELLAEHVDHIVVLPLYPQFSCSTVGAVWDELARILARKRSIPGISFIRDYADNHDYINALANSVRASFAKHGEPDLLLLSYHGIPQRYADEGDDYPQRCRTTTRELASALGMVPEKVMMTFQSRFGREPWLMPYTDETLKMLGEKGVGHIQVMCPGFAADCLETLEEIAEQNREVFLGAGGKKYEYIPALNATPEHIEMMANLVAAYR</sequence>
<comment type="function">
    <text evidence="1">Catalyzes the ferrous insertion into protoporphyrin IX.</text>
</comment>
<comment type="catalytic activity">
    <reaction evidence="1">
        <text>heme b + 2 H(+) = protoporphyrin IX + Fe(2+)</text>
        <dbReference type="Rhea" id="RHEA:22584"/>
        <dbReference type="ChEBI" id="CHEBI:15378"/>
        <dbReference type="ChEBI" id="CHEBI:29033"/>
        <dbReference type="ChEBI" id="CHEBI:57306"/>
        <dbReference type="ChEBI" id="CHEBI:60344"/>
        <dbReference type="EC" id="4.98.1.1"/>
    </reaction>
</comment>
<comment type="pathway">
    <text evidence="1">Porphyrin-containing compound metabolism; protoheme biosynthesis; protoheme from protoporphyrin-IX: step 1/1.</text>
</comment>
<comment type="subunit">
    <text evidence="1">Monomer.</text>
</comment>
<comment type="subcellular location">
    <subcellularLocation>
        <location evidence="1">Cytoplasm</location>
    </subcellularLocation>
</comment>
<comment type="similarity">
    <text evidence="1">Belongs to the ferrochelatase family.</text>
</comment>
<reference key="1">
    <citation type="journal article" date="2006" name="BMC Genomics">
        <title>Complete genome sequence of Shigella flexneri 5b and comparison with Shigella flexneri 2a.</title>
        <authorList>
            <person name="Nie H."/>
            <person name="Yang F."/>
            <person name="Zhang X."/>
            <person name="Yang J."/>
            <person name="Chen L."/>
            <person name="Wang J."/>
            <person name="Xiong Z."/>
            <person name="Peng J."/>
            <person name="Sun L."/>
            <person name="Dong J."/>
            <person name="Xue Y."/>
            <person name="Xu X."/>
            <person name="Chen S."/>
            <person name="Yao Z."/>
            <person name="Shen Y."/>
            <person name="Jin Q."/>
        </authorList>
    </citation>
    <scope>NUCLEOTIDE SEQUENCE [LARGE SCALE GENOMIC DNA]</scope>
    <source>
        <strain>8401</strain>
    </source>
</reference>
<feature type="chain" id="PRO_1000019370" description="Ferrochelatase">
    <location>
        <begin position="1"/>
        <end position="320"/>
    </location>
</feature>
<feature type="binding site" evidence="1">
    <location>
        <position position="194"/>
    </location>
    <ligand>
        <name>Fe cation</name>
        <dbReference type="ChEBI" id="CHEBI:24875"/>
    </ligand>
</feature>
<feature type="binding site" evidence="1">
    <location>
        <position position="275"/>
    </location>
    <ligand>
        <name>Fe cation</name>
        <dbReference type="ChEBI" id="CHEBI:24875"/>
    </ligand>
</feature>